<feature type="chain" id="PRO_1000212199" description="Chaperonin GroEL">
    <location>
        <begin position="1"/>
        <end position="544"/>
    </location>
</feature>
<feature type="binding site" evidence="1">
    <location>
        <begin position="29"/>
        <end position="32"/>
    </location>
    <ligand>
        <name>ATP</name>
        <dbReference type="ChEBI" id="CHEBI:30616"/>
    </ligand>
</feature>
<feature type="binding site" evidence="1">
    <location>
        <begin position="86"/>
        <end position="90"/>
    </location>
    <ligand>
        <name>ATP</name>
        <dbReference type="ChEBI" id="CHEBI:30616"/>
    </ligand>
</feature>
<feature type="binding site" evidence="1">
    <location>
        <position position="413"/>
    </location>
    <ligand>
        <name>ATP</name>
        <dbReference type="ChEBI" id="CHEBI:30616"/>
    </ligand>
</feature>
<feature type="binding site" evidence="1">
    <location>
        <begin position="478"/>
        <end position="480"/>
    </location>
    <ligand>
        <name>ATP</name>
        <dbReference type="ChEBI" id="CHEBI:30616"/>
    </ligand>
</feature>
<feature type="binding site" evidence="1">
    <location>
        <position position="494"/>
    </location>
    <ligand>
        <name>ATP</name>
        <dbReference type="ChEBI" id="CHEBI:30616"/>
    </ligand>
</feature>
<protein>
    <recommendedName>
        <fullName evidence="1">Chaperonin GroEL</fullName>
        <ecNumber evidence="1">5.6.1.7</ecNumber>
    </recommendedName>
    <alternativeName>
        <fullName evidence="1">60 kDa chaperonin</fullName>
    </alternativeName>
    <alternativeName>
        <fullName evidence="1">Chaperonin-60</fullName>
        <shortName evidence="1">Cpn60</shortName>
    </alternativeName>
</protein>
<reference key="1">
    <citation type="journal article" date="2011" name="J. Bacteriol.">
        <title>Complete genome sequence of the Thermophilic Bacterium Exiguobacterium sp. AT1b.</title>
        <authorList>
            <person name="Vishnivetskaya T.A."/>
            <person name="Lucas S."/>
            <person name="Copeland A."/>
            <person name="Lapidus A."/>
            <person name="Glavina del Rio T."/>
            <person name="Dalin E."/>
            <person name="Tice H."/>
            <person name="Bruce D.C."/>
            <person name="Goodwin L.A."/>
            <person name="Pitluck S."/>
            <person name="Saunders E."/>
            <person name="Brettin T."/>
            <person name="Detter C."/>
            <person name="Han C."/>
            <person name="Larimer F."/>
            <person name="Land M.L."/>
            <person name="Hauser L.J."/>
            <person name="Kyrpides N.C."/>
            <person name="Ovchinnikova G."/>
            <person name="Kathariou S."/>
            <person name="Ramaley R.F."/>
            <person name="Rodrigues D.F."/>
            <person name="Hendrix C."/>
            <person name="Richardson P."/>
            <person name="Tiedje J.M."/>
        </authorList>
    </citation>
    <scope>NUCLEOTIDE SEQUENCE [LARGE SCALE GENOMIC DNA]</scope>
    <source>
        <strain>ATCC BAA-1283 / AT1b</strain>
    </source>
</reference>
<dbReference type="EC" id="5.6.1.7" evidence="1"/>
<dbReference type="EMBL" id="CP001615">
    <property type="protein sequence ID" value="ACQ71044.1"/>
    <property type="molecule type" value="Genomic_DNA"/>
</dbReference>
<dbReference type="RefSeq" id="WP_015880603.1">
    <property type="nucleotide sequence ID" value="NC_012673.1"/>
</dbReference>
<dbReference type="SMR" id="C4L1L2"/>
<dbReference type="STRING" id="360911.EAT1b_2121"/>
<dbReference type="KEGG" id="eat:EAT1b_2121"/>
<dbReference type="eggNOG" id="COG0459">
    <property type="taxonomic scope" value="Bacteria"/>
</dbReference>
<dbReference type="HOGENOM" id="CLU_016503_3_0_9"/>
<dbReference type="OrthoDB" id="9766614at2"/>
<dbReference type="Proteomes" id="UP000000716">
    <property type="component" value="Chromosome"/>
</dbReference>
<dbReference type="GO" id="GO:0005737">
    <property type="term" value="C:cytoplasm"/>
    <property type="evidence" value="ECO:0007669"/>
    <property type="project" value="UniProtKB-SubCell"/>
</dbReference>
<dbReference type="GO" id="GO:0005524">
    <property type="term" value="F:ATP binding"/>
    <property type="evidence" value="ECO:0007669"/>
    <property type="project" value="UniProtKB-UniRule"/>
</dbReference>
<dbReference type="GO" id="GO:0140662">
    <property type="term" value="F:ATP-dependent protein folding chaperone"/>
    <property type="evidence" value="ECO:0007669"/>
    <property type="project" value="InterPro"/>
</dbReference>
<dbReference type="GO" id="GO:0016853">
    <property type="term" value="F:isomerase activity"/>
    <property type="evidence" value="ECO:0007669"/>
    <property type="project" value="UniProtKB-KW"/>
</dbReference>
<dbReference type="GO" id="GO:0051082">
    <property type="term" value="F:unfolded protein binding"/>
    <property type="evidence" value="ECO:0007669"/>
    <property type="project" value="UniProtKB-UniRule"/>
</dbReference>
<dbReference type="GO" id="GO:0042026">
    <property type="term" value="P:protein refolding"/>
    <property type="evidence" value="ECO:0007669"/>
    <property type="project" value="UniProtKB-UniRule"/>
</dbReference>
<dbReference type="CDD" id="cd03344">
    <property type="entry name" value="GroEL"/>
    <property type="match status" value="1"/>
</dbReference>
<dbReference type="FunFam" id="1.10.560.10:FF:000001">
    <property type="entry name" value="60 kDa chaperonin"/>
    <property type="match status" value="1"/>
</dbReference>
<dbReference type="FunFam" id="3.50.7.10:FF:000001">
    <property type="entry name" value="60 kDa chaperonin"/>
    <property type="match status" value="1"/>
</dbReference>
<dbReference type="Gene3D" id="3.50.7.10">
    <property type="entry name" value="GroEL"/>
    <property type="match status" value="1"/>
</dbReference>
<dbReference type="Gene3D" id="1.10.560.10">
    <property type="entry name" value="GroEL-like equatorial domain"/>
    <property type="match status" value="1"/>
</dbReference>
<dbReference type="Gene3D" id="3.30.260.10">
    <property type="entry name" value="TCP-1-like chaperonin intermediate domain"/>
    <property type="match status" value="1"/>
</dbReference>
<dbReference type="HAMAP" id="MF_00600">
    <property type="entry name" value="CH60"/>
    <property type="match status" value="1"/>
</dbReference>
<dbReference type="InterPro" id="IPR018370">
    <property type="entry name" value="Chaperonin_Cpn60_CS"/>
</dbReference>
<dbReference type="InterPro" id="IPR001844">
    <property type="entry name" value="Cpn60/GroEL"/>
</dbReference>
<dbReference type="InterPro" id="IPR002423">
    <property type="entry name" value="Cpn60/GroEL/TCP-1"/>
</dbReference>
<dbReference type="InterPro" id="IPR027409">
    <property type="entry name" value="GroEL-like_apical_dom_sf"/>
</dbReference>
<dbReference type="InterPro" id="IPR027413">
    <property type="entry name" value="GROEL-like_equatorial_sf"/>
</dbReference>
<dbReference type="InterPro" id="IPR027410">
    <property type="entry name" value="TCP-1-like_intermed_sf"/>
</dbReference>
<dbReference type="NCBIfam" id="TIGR02348">
    <property type="entry name" value="GroEL"/>
    <property type="match status" value="1"/>
</dbReference>
<dbReference type="NCBIfam" id="NF000592">
    <property type="entry name" value="PRK00013.1"/>
    <property type="match status" value="1"/>
</dbReference>
<dbReference type="NCBIfam" id="NF009487">
    <property type="entry name" value="PRK12849.1"/>
    <property type="match status" value="1"/>
</dbReference>
<dbReference type="NCBIfam" id="NF009488">
    <property type="entry name" value="PRK12850.1"/>
    <property type="match status" value="1"/>
</dbReference>
<dbReference type="NCBIfam" id="NF009489">
    <property type="entry name" value="PRK12851.1"/>
    <property type="match status" value="1"/>
</dbReference>
<dbReference type="PANTHER" id="PTHR45633">
    <property type="entry name" value="60 KDA HEAT SHOCK PROTEIN, MITOCHONDRIAL"/>
    <property type="match status" value="1"/>
</dbReference>
<dbReference type="Pfam" id="PF00118">
    <property type="entry name" value="Cpn60_TCP1"/>
    <property type="match status" value="1"/>
</dbReference>
<dbReference type="PRINTS" id="PR00298">
    <property type="entry name" value="CHAPERONIN60"/>
</dbReference>
<dbReference type="SUPFAM" id="SSF52029">
    <property type="entry name" value="GroEL apical domain-like"/>
    <property type="match status" value="1"/>
</dbReference>
<dbReference type="SUPFAM" id="SSF48592">
    <property type="entry name" value="GroEL equatorial domain-like"/>
    <property type="match status" value="1"/>
</dbReference>
<dbReference type="SUPFAM" id="SSF54849">
    <property type="entry name" value="GroEL-intermediate domain like"/>
    <property type="match status" value="1"/>
</dbReference>
<dbReference type="PROSITE" id="PS00296">
    <property type="entry name" value="CHAPERONINS_CPN60"/>
    <property type="match status" value="1"/>
</dbReference>
<name>CH60_EXISA</name>
<evidence type="ECO:0000255" key="1">
    <source>
        <dbReference type="HAMAP-Rule" id="MF_00600"/>
    </source>
</evidence>
<organism>
    <name type="scientific">Exiguobacterium sp. (strain ATCC BAA-1283 / AT1b)</name>
    <dbReference type="NCBI Taxonomy" id="360911"/>
    <lineage>
        <taxon>Bacteria</taxon>
        <taxon>Bacillati</taxon>
        <taxon>Bacillota</taxon>
        <taxon>Bacilli</taxon>
        <taxon>Bacillales</taxon>
        <taxon>Bacillales Family XII. Incertae Sedis</taxon>
        <taxon>Exiguobacterium</taxon>
    </lineage>
</organism>
<sequence length="544" mass="57608">MAKDIKFSEDARHAMLRGVDALADAVKVTIGPKGRNVVLEKKFGSPLITNDGVTIAKEIELEDRFENMGAKLVAEVASKTNEVAGDGTTTATVLAQAMIREGLKNVTAGANPMILRKGIDKAVTRALEELKAISKPIESKEAIAQVAAISAADEEVGELIAEAMERVGNDGVITIEESRGFTTELDVVEGMQFDRGYLSPYMISDSDKMEASLDNPYILITDKKISNIQEIIPVLEQVVQQGKPILIVAEDIEGDALATLVLNKLRGTFNAVAVKAPGFGDRRKAMLEDLATLTGGQVITEDLGLDLKSASLDMLGRASKVVVTKDTTTVVEGAGNEETIKARVQTIRNQIEETTSDFDREKLQERLAKLAGGVAVVKVGAATETELKERKLRIEDALNATRAAVEEGIVAGGGTSLINVIPAVRALLSEVTADEATGVKLVLRALEAPVRQIAENAGEEGSVIVEKLKNESVGVGYNAATGEYVDMIAHGIVDPAKVTRSALQNAASVSAMFLTTEAVIADKPEKDAPAMPDMGGMGGMGGMM</sequence>
<comment type="function">
    <text evidence="1">Together with its co-chaperonin GroES, plays an essential role in assisting protein folding. The GroEL-GroES system forms a nano-cage that allows encapsulation of the non-native substrate proteins and provides a physical environment optimized to promote and accelerate protein folding.</text>
</comment>
<comment type="catalytic activity">
    <reaction evidence="1">
        <text>ATP + H2O + a folded polypeptide = ADP + phosphate + an unfolded polypeptide.</text>
        <dbReference type="EC" id="5.6.1.7"/>
    </reaction>
</comment>
<comment type="subunit">
    <text evidence="1">Forms a cylinder of 14 subunits composed of two heptameric rings stacked back-to-back. Interacts with the co-chaperonin GroES.</text>
</comment>
<comment type="subcellular location">
    <subcellularLocation>
        <location evidence="1">Cytoplasm</location>
    </subcellularLocation>
</comment>
<comment type="similarity">
    <text evidence="1">Belongs to the chaperonin (HSP60) family.</text>
</comment>
<gene>
    <name evidence="1" type="primary">groEL</name>
    <name evidence="1" type="synonym">groL</name>
    <name type="ordered locus">EAT1b_2121</name>
</gene>
<keyword id="KW-0067">ATP-binding</keyword>
<keyword id="KW-0143">Chaperone</keyword>
<keyword id="KW-0963">Cytoplasm</keyword>
<keyword id="KW-0413">Isomerase</keyword>
<keyword id="KW-0547">Nucleotide-binding</keyword>
<proteinExistence type="inferred from homology"/>
<accession>C4L1L2</accession>